<accession>Q8K9J8</accession>
<reference key="1">
    <citation type="journal article" date="2002" name="Science">
        <title>50 million years of genomic stasis in endosymbiotic bacteria.</title>
        <authorList>
            <person name="Tamas I."/>
            <person name="Klasson L."/>
            <person name="Canbaeck B."/>
            <person name="Naeslund A.K."/>
            <person name="Eriksson A.-S."/>
            <person name="Wernegreen J.J."/>
            <person name="Sandstroem J.P."/>
            <person name="Moran N.A."/>
            <person name="Andersson S.G.E."/>
        </authorList>
    </citation>
    <scope>NUCLEOTIDE SEQUENCE [LARGE SCALE GENOMIC DNA]</scope>
    <source>
        <strain>Sg</strain>
    </source>
</reference>
<evidence type="ECO:0000250" key="1"/>
<evidence type="ECO:0000255" key="2">
    <source>
        <dbReference type="PROSITE-ProRule" id="PRU00182"/>
    </source>
</evidence>
<evidence type="ECO:0000305" key="3"/>
<sequence length="314" mass="36830">MKYKTTSVSIIYINEDMINQRIDNFLQKKLKNVPRSMIYRIIRTGKIRINKKRIKPDYKLKIGDKLRIPPIKILCEKKSSLLTTEYKKNLLNNILYEDNYLLIINKPSGIAVHGGSGINLGVIEYFRKIRPLEKFLELVHRIDRDTSGVLMLAKKRRSLLSLHKQIREKKVQKKYIALVHGLWPLSLRKVSEPLLKTHLKNKQRKILINKEGKPAETYFKIKKQYLFTTLVSITPKTGRTHQIRVHTLHAGHPILFDKRYGKRDLDCNIKNKTKINRLLLHATSINFIHPETGKKMHIVAPLDVYFKNYLNTLI</sequence>
<protein>
    <recommendedName>
        <fullName>Ribosomal large subunit pseudouridine synthase C</fullName>
        <ecNumber>5.4.99.24</ecNumber>
    </recommendedName>
    <alternativeName>
        <fullName>23S rRNA pseudouridine(955/2504/2580) synthase</fullName>
    </alternativeName>
    <alternativeName>
        <fullName>rRNA pseudouridylate synthase C</fullName>
    </alternativeName>
    <alternativeName>
        <fullName>rRNA-uridine isomerase C</fullName>
    </alternativeName>
</protein>
<dbReference type="EC" id="5.4.99.24"/>
<dbReference type="EMBL" id="AE013218">
    <property type="protein sequence ID" value="AAM67890.1"/>
    <property type="molecule type" value="Genomic_DNA"/>
</dbReference>
<dbReference type="RefSeq" id="WP_011053857.1">
    <property type="nucleotide sequence ID" value="NC_004061.1"/>
</dbReference>
<dbReference type="SMR" id="Q8K9J8"/>
<dbReference type="STRING" id="198804.BUsg_336"/>
<dbReference type="GeneID" id="93003807"/>
<dbReference type="KEGG" id="bas:BUsg_336"/>
<dbReference type="eggNOG" id="COG0564">
    <property type="taxonomic scope" value="Bacteria"/>
</dbReference>
<dbReference type="HOGENOM" id="CLU_016902_1_1_6"/>
<dbReference type="Proteomes" id="UP000000416">
    <property type="component" value="Chromosome"/>
</dbReference>
<dbReference type="GO" id="GO:0160141">
    <property type="term" value="F:23S rRNA pseudouridine(955/2504/2580) synthase activity"/>
    <property type="evidence" value="ECO:0007669"/>
    <property type="project" value="UniProtKB-EC"/>
</dbReference>
<dbReference type="GO" id="GO:0003723">
    <property type="term" value="F:RNA binding"/>
    <property type="evidence" value="ECO:0007669"/>
    <property type="project" value="UniProtKB-KW"/>
</dbReference>
<dbReference type="GO" id="GO:0000455">
    <property type="term" value="P:enzyme-directed rRNA pseudouridine synthesis"/>
    <property type="evidence" value="ECO:0007669"/>
    <property type="project" value="UniProtKB-ARBA"/>
</dbReference>
<dbReference type="CDD" id="cd02869">
    <property type="entry name" value="PseudoU_synth_RluA_like"/>
    <property type="match status" value="1"/>
</dbReference>
<dbReference type="CDD" id="cd00165">
    <property type="entry name" value="S4"/>
    <property type="match status" value="1"/>
</dbReference>
<dbReference type="Gene3D" id="3.30.2350.10">
    <property type="entry name" value="Pseudouridine synthase"/>
    <property type="match status" value="1"/>
</dbReference>
<dbReference type="Gene3D" id="3.10.290.10">
    <property type="entry name" value="RNA-binding S4 domain"/>
    <property type="match status" value="1"/>
</dbReference>
<dbReference type="InterPro" id="IPR020103">
    <property type="entry name" value="PsdUridine_synth_cat_dom_sf"/>
</dbReference>
<dbReference type="InterPro" id="IPR006224">
    <property type="entry name" value="PsdUridine_synth_RluA-like_CS"/>
</dbReference>
<dbReference type="InterPro" id="IPR006225">
    <property type="entry name" value="PsdUridine_synth_RluC/D"/>
</dbReference>
<dbReference type="InterPro" id="IPR006145">
    <property type="entry name" value="PsdUridine_synth_RsuA/RluA"/>
</dbReference>
<dbReference type="InterPro" id="IPR050188">
    <property type="entry name" value="RluA_PseudoU_synthase"/>
</dbReference>
<dbReference type="InterPro" id="IPR002942">
    <property type="entry name" value="S4_RNA-bd"/>
</dbReference>
<dbReference type="InterPro" id="IPR036986">
    <property type="entry name" value="S4_RNA-bd_sf"/>
</dbReference>
<dbReference type="NCBIfam" id="NF008249">
    <property type="entry name" value="PRK11025.1"/>
    <property type="match status" value="1"/>
</dbReference>
<dbReference type="NCBIfam" id="TIGR00005">
    <property type="entry name" value="rluA_subfam"/>
    <property type="match status" value="1"/>
</dbReference>
<dbReference type="PANTHER" id="PTHR21600">
    <property type="entry name" value="MITOCHONDRIAL RNA PSEUDOURIDINE SYNTHASE"/>
    <property type="match status" value="1"/>
</dbReference>
<dbReference type="PANTHER" id="PTHR21600:SF92">
    <property type="entry name" value="RIBOSOMAL LARGE SUBUNIT PSEUDOURIDINE SYNTHASE C"/>
    <property type="match status" value="1"/>
</dbReference>
<dbReference type="Pfam" id="PF00849">
    <property type="entry name" value="PseudoU_synth_2"/>
    <property type="match status" value="1"/>
</dbReference>
<dbReference type="Pfam" id="PF01479">
    <property type="entry name" value="S4"/>
    <property type="match status" value="1"/>
</dbReference>
<dbReference type="SMART" id="SM00363">
    <property type="entry name" value="S4"/>
    <property type="match status" value="1"/>
</dbReference>
<dbReference type="SUPFAM" id="SSF55174">
    <property type="entry name" value="Alpha-L RNA-binding motif"/>
    <property type="match status" value="1"/>
</dbReference>
<dbReference type="SUPFAM" id="SSF55120">
    <property type="entry name" value="Pseudouridine synthase"/>
    <property type="match status" value="1"/>
</dbReference>
<dbReference type="PROSITE" id="PS01129">
    <property type="entry name" value="PSI_RLU"/>
    <property type="match status" value="1"/>
</dbReference>
<dbReference type="PROSITE" id="PS50889">
    <property type="entry name" value="S4"/>
    <property type="match status" value="1"/>
</dbReference>
<gene>
    <name type="primary">rluC</name>
    <name type="ordered locus">BUsg_336</name>
</gene>
<keyword id="KW-0413">Isomerase</keyword>
<keyword id="KW-0694">RNA-binding</keyword>
<keyword id="KW-0698">rRNA processing</keyword>
<comment type="function">
    <text evidence="1">Responsible for synthesis of pseudouridine from uracil at positions 955, 2504 and 2580 in 23S ribosomal RNA.</text>
</comment>
<comment type="catalytic activity">
    <reaction>
        <text>uridine(955/2504/2580) in 23S rRNA = pseudouridine(955/2504/2580) in 23S rRNA</text>
        <dbReference type="Rhea" id="RHEA:42528"/>
        <dbReference type="Rhea" id="RHEA-COMP:10099"/>
        <dbReference type="Rhea" id="RHEA-COMP:10100"/>
        <dbReference type="ChEBI" id="CHEBI:65314"/>
        <dbReference type="ChEBI" id="CHEBI:65315"/>
        <dbReference type="EC" id="5.4.99.24"/>
    </reaction>
</comment>
<comment type="similarity">
    <text evidence="3">Belongs to the pseudouridine synthase RluA family.</text>
</comment>
<feature type="chain" id="PRO_0000162665" description="Ribosomal large subunit pseudouridine synthase C">
    <location>
        <begin position="1"/>
        <end position="314"/>
    </location>
</feature>
<feature type="domain" description="S4 RNA-binding" evidence="2">
    <location>
        <begin position="20"/>
        <end position="94"/>
    </location>
</feature>
<feature type="active site" evidence="1">
    <location>
        <position position="143"/>
    </location>
</feature>
<name>RLUC_BUCAP</name>
<proteinExistence type="inferred from homology"/>
<organism>
    <name type="scientific">Buchnera aphidicola subsp. Schizaphis graminum (strain Sg)</name>
    <dbReference type="NCBI Taxonomy" id="198804"/>
    <lineage>
        <taxon>Bacteria</taxon>
        <taxon>Pseudomonadati</taxon>
        <taxon>Pseudomonadota</taxon>
        <taxon>Gammaproteobacteria</taxon>
        <taxon>Enterobacterales</taxon>
        <taxon>Erwiniaceae</taxon>
        <taxon>Buchnera</taxon>
    </lineage>
</organism>